<accession>Q7V2Z9</accession>
<keyword id="KW-0249">Electron transport</keyword>
<keyword id="KW-0349">Heme</keyword>
<keyword id="KW-0408">Iron</keyword>
<keyword id="KW-0472">Membrane</keyword>
<keyword id="KW-0479">Metal-binding</keyword>
<keyword id="KW-0602">Photosynthesis</keyword>
<keyword id="KW-0604">Photosystem II</keyword>
<keyword id="KW-0793">Thylakoid</keyword>
<keyword id="KW-0812">Transmembrane</keyword>
<keyword id="KW-1133">Transmembrane helix</keyword>
<keyword id="KW-0813">Transport</keyword>
<sequence>MSNSQAPMQAVEVRVYPIFTIRWLAVHALAIPSVFFLGAIAAMQFLR</sequence>
<feature type="chain" id="PRO_0000200471" description="Cytochrome b559 subunit beta">
    <location>
        <begin position="1"/>
        <end position="47"/>
    </location>
</feature>
<feature type="transmembrane region" description="Helical" evidence="1">
    <location>
        <begin position="23"/>
        <end position="39"/>
    </location>
</feature>
<feature type="binding site" description="axial binding residue" evidence="1">
    <location>
        <position position="27"/>
    </location>
    <ligand>
        <name>heme</name>
        <dbReference type="ChEBI" id="CHEBI:30413"/>
        <note>ligand shared with alpha subunit</note>
    </ligand>
    <ligandPart>
        <name>Fe</name>
        <dbReference type="ChEBI" id="CHEBI:18248"/>
    </ligandPart>
</feature>
<evidence type="ECO:0000255" key="1">
    <source>
        <dbReference type="HAMAP-Rule" id="MF_00643"/>
    </source>
</evidence>
<evidence type="ECO:0000305" key="2"/>
<gene>
    <name evidence="1" type="primary">psbF</name>
    <name type="ordered locus">PMM0298</name>
</gene>
<name>PSBF_PROMP</name>
<comment type="function">
    <text evidence="1">This b-type cytochrome is tightly associated with the reaction center of photosystem II (PSII). PSII is a light-driven water:plastoquinone oxidoreductase that uses light energy to abstract electrons from H(2)O, generating O(2) and a proton gradient subsequently used for ATP formation. It consists of a core antenna complex that captures photons, and an electron transfer chain that converts photonic excitation into a charge separation.</text>
</comment>
<comment type="cofactor">
    <cofactor evidence="1">
        <name>heme b</name>
        <dbReference type="ChEBI" id="CHEBI:60344"/>
    </cofactor>
    <text evidence="1">With its partner (PsbE) binds heme. PSII binds additional chlorophylls, carotenoids and specific lipids.</text>
</comment>
<comment type="subunit">
    <text evidence="2">Heterodimer of an alpha subunit and a beta subunit. PSII is composed of 1 copy each of membrane proteins PsbA, PsbB, PsbC, PsbD, PsbE, PsbF, PsbH, PsbI, PsbJ, PsbK, PsbL, PsbM, PsbT, PsbX, PsbY, Psb30/Ycf12, peripheral proteins PsbO, CyanoQ (PsbQ), PsbU, PsbV and a large number of cofactors. It forms dimeric complexes.</text>
</comment>
<comment type="subcellular location">
    <subcellularLocation>
        <location evidence="1">Cellular thylakoid membrane</location>
        <topology evidence="1">Single-pass membrane protein</topology>
    </subcellularLocation>
</comment>
<comment type="similarity">
    <text evidence="1">Belongs to the PsbE/PsbF family.</text>
</comment>
<protein>
    <recommendedName>
        <fullName evidence="1">Cytochrome b559 subunit beta</fullName>
    </recommendedName>
    <alternativeName>
        <fullName evidence="1">PSII reaction center subunit VI</fullName>
    </alternativeName>
</protein>
<dbReference type="EMBL" id="BX548174">
    <property type="protein sequence ID" value="CAE18757.1"/>
    <property type="molecule type" value="Genomic_DNA"/>
</dbReference>
<dbReference type="RefSeq" id="WP_011131935.1">
    <property type="nucleotide sequence ID" value="NC_005072.1"/>
</dbReference>
<dbReference type="SMR" id="Q7V2Z9"/>
<dbReference type="STRING" id="59919.PMM0298"/>
<dbReference type="KEGG" id="pmm:PMM0298"/>
<dbReference type="eggNOG" id="ENOG50332KX">
    <property type="taxonomic scope" value="Bacteria"/>
</dbReference>
<dbReference type="HOGENOM" id="CLU_211753_1_0_3"/>
<dbReference type="OrthoDB" id="532613at2"/>
<dbReference type="Proteomes" id="UP000001026">
    <property type="component" value="Chromosome"/>
</dbReference>
<dbReference type="GO" id="GO:0009539">
    <property type="term" value="C:photosystem II reaction center"/>
    <property type="evidence" value="ECO:0007669"/>
    <property type="project" value="InterPro"/>
</dbReference>
<dbReference type="GO" id="GO:0031676">
    <property type="term" value="C:plasma membrane-derived thylakoid membrane"/>
    <property type="evidence" value="ECO:0007669"/>
    <property type="project" value="UniProtKB-SubCell"/>
</dbReference>
<dbReference type="GO" id="GO:0009055">
    <property type="term" value="F:electron transfer activity"/>
    <property type="evidence" value="ECO:0007669"/>
    <property type="project" value="UniProtKB-UniRule"/>
</dbReference>
<dbReference type="GO" id="GO:0020037">
    <property type="term" value="F:heme binding"/>
    <property type="evidence" value="ECO:0007669"/>
    <property type="project" value="InterPro"/>
</dbReference>
<dbReference type="GO" id="GO:0005506">
    <property type="term" value="F:iron ion binding"/>
    <property type="evidence" value="ECO:0007669"/>
    <property type="project" value="UniProtKB-UniRule"/>
</dbReference>
<dbReference type="GO" id="GO:0009767">
    <property type="term" value="P:photosynthetic electron transport chain"/>
    <property type="evidence" value="ECO:0007669"/>
    <property type="project" value="InterPro"/>
</dbReference>
<dbReference type="HAMAP" id="MF_00643">
    <property type="entry name" value="PSII_PsbF"/>
    <property type="match status" value="1"/>
</dbReference>
<dbReference type="InterPro" id="IPR006241">
    <property type="entry name" value="PSII_cyt_b559_bsu"/>
</dbReference>
<dbReference type="InterPro" id="IPR006216">
    <property type="entry name" value="PSII_cyt_b559_CS"/>
</dbReference>
<dbReference type="InterPro" id="IPR013081">
    <property type="entry name" value="PSII_cyt_b559_N"/>
</dbReference>
<dbReference type="NCBIfam" id="TIGR01333">
    <property type="entry name" value="cyt_b559_beta"/>
    <property type="match status" value="1"/>
</dbReference>
<dbReference type="Pfam" id="PF00283">
    <property type="entry name" value="Cytochrom_B559"/>
    <property type="match status" value="1"/>
</dbReference>
<dbReference type="PIRSF" id="PIRSF000037">
    <property type="entry name" value="PsbF"/>
    <property type="match status" value="1"/>
</dbReference>
<dbReference type="SUPFAM" id="SSF161045">
    <property type="entry name" value="Cytochrome b559 subunits"/>
    <property type="match status" value="1"/>
</dbReference>
<dbReference type="PROSITE" id="PS00537">
    <property type="entry name" value="CYTOCHROME_B559"/>
    <property type="match status" value="1"/>
</dbReference>
<proteinExistence type="inferred from homology"/>
<reference key="1">
    <citation type="journal article" date="2003" name="Nature">
        <title>Genome divergence in two Prochlorococcus ecotypes reflects oceanic niche differentiation.</title>
        <authorList>
            <person name="Rocap G."/>
            <person name="Larimer F.W."/>
            <person name="Lamerdin J.E."/>
            <person name="Malfatti S."/>
            <person name="Chain P."/>
            <person name="Ahlgren N.A."/>
            <person name="Arellano A."/>
            <person name="Coleman M."/>
            <person name="Hauser L."/>
            <person name="Hess W.R."/>
            <person name="Johnson Z.I."/>
            <person name="Land M.L."/>
            <person name="Lindell D."/>
            <person name="Post A.F."/>
            <person name="Regala W."/>
            <person name="Shah M."/>
            <person name="Shaw S.L."/>
            <person name="Steglich C."/>
            <person name="Sullivan M.B."/>
            <person name="Ting C.S."/>
            <person name="Tolonen A."/>
            <person name="Webb E.A."/>
            <person name="Zinser E.R."/>
            <person name="Chisholm S.W."/>
        </authorList>
    </citation>
    <scope>NUCLEOTIDE SEQUENCE [LARGE SCALE GENOMIC DNA]</scope>
    <source>
        <strain>CCMP1986 / NIES-2087 / MED4</strain>
    </source>
</reference>
<organism>
    <name type="scientific">Prochlorococcus marinus subsp. pastoris (strain CCMP1986 / NIES-2087 / MED4)</name>
    <dbReference type="NCBI Taxonomy" id="59919"/>
    <lineage>
        <taxon>Bacteria</taxon>
        <taxon>Bacillati</taxon>
        <taxon>Cyanobacteriota</taxon>
        <taxon>Cyanophyceae</taxon>
        <taxon>Synechococcales</taxon>
        <taxon>Prochlorococcaceae</taxon>
        <taxon>Prochlorococcus</taxon>
    </lineage>
</organism>